<accession>Q7MII4</accession>
<protein>
    <recommendedName>
        <fullName evidence="1">Hydroxyacylglutathione hydrolase 2</fullName>
        <ecNumber evidence="1">3.1.2.6</ecNumber>
    </recommendedName>
    <alternativeName>
        <fullName evidence="1">Glyoxalase II 2</fullName>
        <shortName evidence="1">Glx II 2</shortName>
    </alternativeName>
</protein>
<organism>
    <name type="scientific">Vibrio vulnificus (strain YJ016)</name>
    <dbReference type="NCBI Taxonomy" id="196600"/>
    <lineage>
        <taxon>Bacteria</taxon>
        <taxon>Pseudomonadati</taxon>
        <taxon>Pseudomonadota</taxon>
        <taxon>Gammaproteobacteria</taxon>
        <taxon>Vibrionales</taxon>
        <taxon>Vibrionaceae</taxon>
        <taxon>Vibrio</taxon>
    </lineage>
</organism>
<comment type="function">
    <text evidence="1">Thiolesterase that catalyzes the hydrolysis of S-D-lactoyl-glutathione to form glutathione and D-lactic acid.</text>
</comment>
<comment type="catalytic activity">
    <reaction evidence="1">
        <text>an S-(2-hydroxyacyl)glutathione + H2O = a 2-hydroxy carboxylate + glutathione + H(+)</text>
        <dbReference type="Rhea" id="RHEA:21864"/>
        <dbReference type="ChEBI" id="CHEBI:15377"/>
        <dbReference type="ChEBI" id="CHEBI:15378"/>
        <dbReference type="ChEBI" id="CHEBI:57925"/>
        <dbReference type="ChEBI" id="CHEBI:58896"/>
        <dbReference type="ChEBI" id="CHEBI:71261"/>
        <dbReference type="EC" id="3.1.2.6"/>
    </reaction>
</comment>
<comment type="cofactor">
    <cofactor evidence="1">
        <name>Zn(2+)</name>
        <dbReference type="ChEBI" id="CHEBI:29105"/>
    </cofactor>
    <text evidence="1">Binds 2 Zn(2+) ions per subunit.</text>
</comment>
<comment type="pathway">
    <text evidence="1">Secondary metabolite metabolism; methylglyoxal degradation; (R)-lactate from methylglyoxal: step 2/2.</text>
</comment>
<comment type="subunit">
    <text evidence="1">Monomer.</text>
</comment>
<comment type="similarity">
    <text evidence="1">Belongs to the metallo-beta-lactamase superfamily. Glyoxalase II family.</text>
</comment>
<dbReference type="EC" id="3.1.2.6" evidence="1"/>
<dbReference type="EMBL" id="BA000037">
    <property type="protein sequence ID" value="BAC95296.1"/>
    <property type="molecule type" value="Genomic_DNA"/>
</dbReference>
<dbReference type="SMR" id="Q7MII4"/>
<dbReference type="STRING" id="672.VV93_v1c22530"/>
<dbReference type="KEGG" id="vvy:VV2532"/>
<dbReference type="PATRIC" id="fig|196600.6.peg.2538"/>
<dbReference type="eggNOG" id="COG0491">
    <property type="taxonomic scope" value="Bacteria"/>
</dbReference>
<dbReference type="HOGENOM" id="CLU_030571_4_1_6"/>
<dbReference type="UniPathway" id="UPA00619">
    <property type="reaction ID" value="UER00676"/>
</dbReference>
<dbReference type="Proteomes" id="UP000002675">
    <property type="component" value="Chromosome I"/>
</dbReference>
<dbReference type="GO" id="GO:0004416">
    <property type="term" value="F:hydroxyacylglutathione hydrolase activity"/>
    <property type="evidence" value="ECO:0007669"/>
    <property type="project" value="UniProtKB-UniRule"/>
</dbReference>
<dbReference type="GO" id="GO:0046872">
    <property type="term" value="F:metal ion binding"/>
    <property type="evidence" value="ECO:0007669"/>
    <property type="project" value="UniProtKB-KW"/>
</dbReference>
<dbReference type="GO" id="GO:0019243">
    <property type="term" value="P:methylglyoxal catabolic process to D-lactate via S-lactoyl-glutathione"/>
    <property type="evidence" value="ECO:0007669"/>
    <property type="project" value="InterPro"/>
</dbReference>
<dbReference type="CDD" id="cd07723">
    <property type="entry name" value="hydroxyacylglutathione_hydrolase_MBL-fold"/>
    <property type="match status" value="1"/>
</dbReference>
<dbReference type="Gene3D" id="3.60.15.10">
    <property type="entry name" value="Ribonuclease Z/Hydroxyacylglutathione hydrolase-like"/>
    <property type="match status" value="1"/>
</dbReference>
<dbReference type="HAMAP" id="MF_01374">
    <property type="entry name" value="Glyoxalase_2"/>
    <property type="match status" value="1"/>
</dbReference>
<dbReference type="InterPro" id="IPR035680">
    <property type="entry name" value="Clx_II_MBL"/>
</dbReference>
<dbReference type="InterPro" id="IPR050110">
    <property type="entry name" value="Glyoxalase_II_hydrolase"/>
</dbReference>
<dbReference type="InterPro" id="IPR032282">
    <property type="entry name" value="HAGH_C"/>
</dbReference>
<dbReference type="InterPro" id="IPR017782">
    <property type="entry name" value="Hydroxyacylglutathione_Hdrlase"/>
</dbReference>
<dbReference type="InterPro" id="IPR001279">
    <property type="entry name" value="Metallo-B-lactamas"/>
</dbReference>
<dbReference type="InterPro" id="IPR036866">
    <property type="entry name" value="RibonucZ/Hydroxyglut_hydro"/>
</dbReference>
<dbReference type="NCBIfam" id="TIGR03413">
    <property type="entry name" value="GSH_gloB"/>
    <property type="match status" value="1"/>
</dbReference>
<dbReference type="PANTHER" id="PTHR43705">
    <property type="entry name" value="HYDROXYACYLGLUTATHIONE HYDROLASE"/>
    <property type="match status" value="1"/>
</dbReference>
<dbReference type="PANTHER" id="PTHR43705:SF1">
    <property type="entry name" value="HYDROXYACYLGLUTATHIONE HYDROLASE GLOB"/>
    <property type="match status" value="1"/>
</dbReference>
<dbReference type="Pfam" id="PF16123">
    <property type="entry name" value="HAGH_C"/>
    <property type="match status" value="1"/>
</dbReference>
<dbReference type="Pfam" id="PF00753">
    <property type="entry name" value="Lactamase_B"/>
    <property type="match status" value="1"/>
</dbReference>
<dbReference type="PIRSF" id="PIRSF005457">
    <property type="entry name" value="Glx"/>
    <property type="match status" value="1"/>
</dbReference>
<dbReference type="SMART" id="SM00849">
    <property type="entry name" value="Lactamase_B"/>
    <property type="match status" value="1"/>
</dbReference>
<dbReference type="SUPFAM" id="SSF56281">
    <property type="entry name" value="Metallo-hydrolase/oxidoreductase"/>
    <property type="match status" value="1"/>
</dbReference>
<name>GLO22_VIBVY</name>
<sequence>MLEIKSIPAFNDNYIWLIQNSDQRCAVVDPGDAKPVLHYIEQHQLTLEAILITHHHNDHIGGVADLVRAFPNVNVVGPKAEPIPTLTHPVEDGDRLELFDETFLVLGLGGHTLGHIGYVGDGKLFCGDVLFSAGCGRIFEGTAQQMFDSLNKLLALPEETEVFCAHEYTASNVAFALAVEPDNELLHQYRDTVNRLRAQNLPTIPTTLRQEKWINPFLRYLQPSVIHSVSSRTKNSDPLSVFTALREWKNEF</sequence>
<keyword id="KW-0378">Hydrolase</keyword>
<keyword id="KW-0479">Metal-binding</keyword>
<keyword id="KW-0862">Zinc</keyword>
<gene>
    <name evidence="1" type="primary">gloB2</name>
    <name type="ordered locus">VV2532</name>
</gene>
<proteinExistence type="inferred from homology"/>
<evidence type="ECO:0000255" key="1">
    <source>
        <dbReference type="HAMAP-Rule" id="MF_01374"/>
    </source>
</evidence>
<feature type="chain" id="PRO_0000309723" description="Hydroxyacylglutathione hydrolase 2">
    <location>
        <begin position="1"/>
        <end position="252"/>
    </location>
</feature>
<feature type="binding site" evidence="1">
    <location>
        <position position="54"/>
    </location>
    <ligand>
        <name>Zn(2+)</name>
        <dbReference type="ChEBI" id="CHEBI:29105"/>
        <label>1</label>
    </ligand>
</feature>
<feature type="binding site" evidence="1">
    <location>
        <position position="56"/>
    </location>
    <ligand>
        <name>Zn(2+)</name>
        <dbReference type="ChEBI" id="CHEBI:29105"/>
        <label>1</label>
    </ligand>
</feature>
<feature type="binding site" evidence="1">
    <location>
        <position position="58"/>
    </location>
    <ligand>
        <name>Zn(2+)</name>
        <dbReference type="ChEBI" id="CHEBI:29105"/>
        <label>2</label>
    </ligand>
</feature>
<feature type="binding site" evidence="1">
    <location>
        <position position="59"/>
    </location>
    <ligand>
        <name>Zn(2+)</name>
        <dbReference type="ChEBI" id="CHEBI:29105"/>
        <label>2</label>
    </ligand>
</feature>
<feature type="binding site" evidence="1">
    <location>
        <position position="111"/>
    </location>
    <ligand>
        <name>Zn(2+)</name>
        <dbReference type="ChEBI" id="CHEBI:29105"/>
        <label>1</label>
    </ligand>
</feature>
<feature type="binding site" evidence="1">
    <location>
        <position position="128"/>
    </location>
    <ligand>
        <name>Zn(2+)</name>
        <dbReference type="ChEBI" id="CHEBI:29105"/>
        <label>1</label>
    </ligand>
</feature>
<feature type="binding site" evidence="1">
    <location>
        <position position="128"/>
    </location>
    <ligand>
        <name>Zn(2+)</name>
        <dbReference type="ChEBI" id="CHEBI:29105"/>
        <label>2</label>
    </ligand>
</feature>
<feature type="binding site" evidence="1">
    <location>
        <position position="166"/>
    </location>
    <ligand>
        <name>Zn(2+)</name>
        <dbReference type="ChEBI" id="CHEBI:29105"/>
        <label>2</label>
    </ligand>
</feature>
<reference key="1">
    <citation type="journal article" date="2003" name="Genome Res.">
        <title>Comparative genome analysis of Vibrio vulnificus, a marine pathogen.</title>
        <authorList>
            <person name="Chen C.-Y."/>
            <person name="Wu K.-M."/>
            <person name="Chang Y.-C."/>
            <person name="Chang C.-H."/>
            <person name="Tsai H.-C."/>
            <person name="Liao T.-L."/>
            <person name="Liu Y.-M."/>
            <person name="Chen H.-J."/>
            <person name="Shen A.B.-T."/>
            <person name="Li J.-C."/>
            <person name="Su T.-L."/>
            <person name="Shao C.-P."/>
            <person name="Lee C.-T."/>
            <person name="Hor L.-I."/>
            <person name="Tsai S.-F."/>
        </authorList>
    </citation>
    <scope>NUCLEOTIDE SEQUENCE [LARGE SCALE GENOMIC DNA]</scope>
    <source>
        <strain>YJ016</strain>
    </source>
</reference>